<dbReference type="EC" id="3.1.-.-" evidence="1"/>
<dbReference type="EMBL" id="AE005674">
    <property type="protein sequence ID" value="AAN42260.1"/>
    <property type="molecule type" value="Genomic_DNA"/>
</dbReference>
<dbReference type="EMBL" id="AE014073">
    <property type="protein sequence ID" value="AAP16131.1"/>
    <property type="molecule type" value="Genomic_DNA"/>
</dbReference>
<dbReference type="RefSeq" id="NP_706553.1">
    <property type="nucleotide sequence ID" value="NC_004337.2"/>
</dbReference>
<dbReference type="RefSeq" id="WP_000084469.1">
    <property type="nucleotide sequence ID" value="NZ_WPGW01000002.1"/>
</dbReference>
<dbReference type="SMR" id="P0A899"/>
<dbReference type="STRING" id="198214.SF0623"/>
<dbReference type="PaxDb" id="198214-SF0623"/>
<dbReference type="GeneID" id="1023572"/>
<dbReference type="GeneID" id="93776823"/>
<dbReference type="KEGG" id="sfl:SF0623"/>
<dbReference type="KEGG" id="sfx:S0645"/>
<dbReference type="PATRIC" id="fig|198214.7.peg.728"/>
<dbReference type="HOGENOM" id="CLU_106710_0_1_6"/>
<dbReference type="Proteomes" id="UP000001006">
    <property type="component" value="Chromosome"/>
</dbReference>
<dbReference type="Proteomes" id="UP000002673">
    <property type="component" value="Chromosome"/>
</dbReference>
<dbReference type="GO" id="GO:0005737">
    <property type="term" value="C:cytoplasm"/>
    <property type="evidence" value="ECO:0007669"/>
    <property type="project" value="UniProtKB-SubCell"/>
</dbReference>
<dbReference type="GO" id="GO:0004222">
    <property type="term" value="F:metalloendopeptidase activity"/>
    <property type="evidence" value="ECO:0007669"/>
    <property type="project" value="InterPro"/>
</dbReference>
<dbReference type="GO" id="GO:0004521">
    <property type="term" value="F:RNA endonuclease activity"/>
    <property type="evidence" value="ECO:0007669"/>
    <property type="project" value="UniProtKB-UniRule"/>
</dbReference>
<dbReference type="GO" id="GO:0008270">
    <property type="term" value="F:zinc ion binding"/>
    <property type="evidence" value="ECO:0007669"/>
    <property type="project" value="UniProtKB-UniRule"/>
</dbReference>
<dbReference type="GO" id="GO:0006364">
    <property type="term" value="P:rRNA processing"/>
    <property type="evidence" value="ECO:0007669"/>
    <property type="project" value="UniProtKB-UniRule"/>
</dbReference>
<dbReference type="FunFam" id="3.40.390.30:FF:000001">
    <property type="entry name" value="Endoribonuclease YbeY"/>
    <property type="match status" value="1"/>
</dbReference>
<dbReference type="Gene3D" id="3.40.390.30">
    <property type="entry name" value="Metalloproteases ('zincins'), catalytic domain"/>
    <property type="match status" value="1"/>
</dbReference>
<dbReference type="HAMAP" id="MF_00009">
    <property type="entry name" value="Endoribonucl_YbeY"/>
    <property type="match status" value="1"/>
</dbReference>
<dbReference type="InterPro" id="IPR023091">
    <property type="entry name" value="MetalPrtase_cat_dom_sf_prd"/>
</dbReference>
<dbReference type="InterPro" id="IPR002036">
    <property type="entry name" value="YbeY"/>
</dbReference>
<dbReference type="InterPro" id="IPR020549">
    <property type="entry name" value="YbeY_CS"/>
</dbReference>
<dbReference type="NCBIfam" id="TIGR00043">
    <property type="entry name" value="rRNA maturation RNase YbeY"/>
    <property type="match status" value="1"/>
</dbReference>
<dbReference type="PANTHER" id="PTHR46986">
    <property type="entry name" value="ENDORIBONUCLEASE YBEY, CHLOROPLASTIC"/>
    <property type="match status" value="1"/>
</dbReference>
<dbReference type="PANTHER" id="PTHR46986:SF1">
    <property type="entry name" value="ENDORIBONUCLEASE YBEY, CHLOROPLASTIC"/>
    <property type="match status" value="1"/>
</dbReference>
<dbReference type="Pfam" id="PF02130">
    <property type="entry name" value="YbeY"/>
    <property type="match status" value="1"/>
</dbReference>
<dbReference type="SUPFAM" id="SSF55486">
    <property type="entry name" value="Metalloproteases ('zincins'), catalytic domain"/>
    <property type="match status" value="1"/>
</dbReference>
<dbReference type="PROSITE" id="PS01306">
    <property type="entry name" value="UPF0054"/>
    <property type="match status" value="1"/>
</dbReference>
<evidence type="ECO:0000255" key="1">
    <source>
        <dbReference type="HAMAP-Rule" id="MF_00009"/>
    </source>
</evidence>
<proteinExistence type="inferred from homology"/>
<comment type="function">
    <text evidence="1">Single strand-specific metallo-endoribonuclease involved in late-stage 70S ribosome quality control and in maturation of the 3' terminus of the 16S rRNA.</text>
</comment>
<comment type="cofactor">
    <cofactor evidence="1">
        <name>Zn(2+)</name>
        <dbReference type="ChEBI" id="CHEBI:29105"/>
    </cofactor>
    <text evidence="1">Binds 1 zinc ion.</text>
</comment>
<comment type="subcellular location">
    <subcellularLocation>
        <location evidence="1">Cytoplasm</location>
    </subcellularLocation>
</comment>
<comment type="similarity">
    <text evidence="1">Belongs to the endoribonuclease YbeY family.</text>
</comment>
<feature type="chain" id="PRO_0000102525" description="Endoribonuclease YbeY">
    <location>
        <begin position="1"/>
        <end position="155"/>
    </location>
</feature>
<feature type="binding site" evidence="1">
    <location>
        <position position="114"/>
    </location>
    <ligand>
        <name>Zn(2+)</name>
        <dbReference type="ChEBI" id="CHEBI:29105"/>
        <note>catalytic</note>
    </ligand>
</feature>
<feature type="binding site" evidence="1">
    <location>
        <position position="118"/>
    </location>
    <ligand>
        <name>Zn(2+)</name>
        <dbReference type="ChEBI" id="CHEBI:29105"/>
        <note>catalytic</note>
    </ligand>
</feature>
<feature type="binding site" evidence="1">
    <location>
        <position position="124"/>
    </location>
    <ligand>
        <name>Zn(2+)</name>
        <dbReference type="ChEBI" id="CHEBI:29105"/>
        <note>catalytic</note>
    </ligand>
</feature>
<organism>
    <name type="scientific">Shigella flexneri</name>
    <dbReference type="NCBI Taxonomy" id="623"/>
    <lineage>
        <taxon>Bacteria</taxon>
        <taxon>Pseudomonadati</taxon>
        <taxon>Pseudomonadota</taxon>
        <taxon>Gammaproteobacteria</taxon>
        <taxon>Enterobacterales</taxon>
        <taxon>Enterobacteriaceae</taxon>
        <taxon>Shigella</taxon>
    </lineage>
</organism>
<reference key="1">
    <citation type="journal article" date="2002" name="Nucleic Acids Res.">
        <title>Genome sequence of Shigella flexneri 2a: insights into pathogenicity through comparison with genomes of Escherichia coli K12 and O157.</title>
        <authorList>
            <person name="Jin Q."/>
            <person name="Yuan Z."/>
            <person name="Xu J."/>
            <person name="Wang Y."/>
            <person name="Shen Y."/>
            <person name="Lu W."/>
            <person name="Wang J."/>
            <person name="Liu H."/>
            <person name="Yang J."/>
            <person name="Yang F."/>
            <person name="Zhang X."/>
            <person name="Zhang J."/>
            <person name="Yang G."/>
            <person name="Wu H."/>
            <person name="Qu D."/>
            <person name="Dong J."/>
            <person name="Sun L."/>
            <person name="Xue Y."/>
            <person name="Zhao A."/>
            <person name="Gao Y."/>
            <person name="Zhu J."/>
            <person name="Kan B."/>
            <person name="Ding K."/>
            <person name="Chen S."/>
            <person name="Cheng H."/>
            <person name="Yao Z."/>
            <person name="He B."/>
            <person name="Chen R."/>
            <person name="Ma D."/>
            <person name="Qiang B."/>
            <person name="Wen Y."/>
            <person name="Hou Y."/>
            <person name="Yu J."/>
        </authorList>
    </citation>
    <scope>NUCLEOTIDE SEQUENCE [LARGE SCALE GENOMIC DNA]</scope>
    <source>
        <strain>301 / Serotype 2a</strain>
    </source>
</reference>
<reference key="2">
    <citation type="journal article" date="2003" name="Infect. Immun.">
        <title>Complete genome sequence and comparative genomics of Shigella flexneri serotype 2a strain 2457T.</title>
        <authorList>
            <person name="Wei J."/>
            <person name="Goldberg M.B."/>
            <person name="Burland V."/>
            <person name="Venkatesan M.M."/>
            <person name="Deng W."/>
            <person name="Fournier G."/>
            <person name="Mayhew G.F."/>
            <person name="Plunkett G. III"/>
            <person name="Rose D.J."/>
            <person name="Darling A."/>
            <person name="Mau B."/>
            <person name="Perna N.T."/>
            <person name="Payne S.M."/>
            <person name="Runyen-Janecky L.J."/>
            <person name="Zhou S."/>
            <person name="Schwartz D.C."/>
            <person name="Blattner F.R."/>
        </authorList>
    </citation>
    <scope>NUCLEOTIDE SEQUENCE [LARGE SCALE GENOMIC DNA]</scope>
    <source>
        <strain>ATCC 700930 / 2457T / Serotype 2a</strain>
    </source>
</reference>
<keyword id="KW-0963">Cytoplasm</keyword>
<keyword id="KW-0255">Endonuclease</keyword>
<keyword id="KW-0378">Hydrolase</keyword>
<keyword id="KW-0479">Metal-binding</keyword>
<keyword id="KW-0540">Nuclease</keyword>
<keyword id="KW-1185">Reference proteome</keyword>
<keyword id="KW-0690">Ribosome biogenesis</keyword>
<keyword id="KW-0698">rRNA processing</keyword>
<keyword id="KW-0862">Zinc</keyword>
<protein>
    <recommendedName>
        <fullName evidence="1">Endoribonuclease YbeY</fullName>
        <ecNumber evidence="1">3.1.-.-</ecNumber>
    </recommendedName>
</protein>
<name>YBEY_SHIFL</name>
<sequence length="155" mass="17526">MSQVILDLQLACEDNSGLPEESQFQTWLNAVIPQFQEESEVTIRVVDTAESHSLNLTYRGKDKPTNVLSFPFEVPPGMEMSLLGDLVICRQVVEKEAQEQGKPLEAHWAHMVVHGSLHLLGYDHIEDDEAEEMEALETEIMLALGYEDPYIAEKE</sequence>
<gene>
    <name evidence="1" type="primary">ybeY</name>
    <name type="ordered locus">SF0623</name>
    <name type="ordered locus">S0645</name>
</gene>
<accession>P0A899</accession>
<accession>P77385</accession>